<feature type="chain" id="PRO_0000411592" description="DNA gyrase subunit B">
    <location>
        <begin position="1"/>
        <end position="650"/>
    </location>
</feature>
<feature type="domain" description="Toprim" evidence="1">
    <location>
        <begin position="429"/>
        <end position="543"/>
    </location>
</feature>
<feature type="binding site" evidence="1">
    <location>
        <position position="435"/>
    </location>
    <ligand>
        <name>Mg(2+)</name>
        <dbReference type="ChEBI" id="CHEBI:18420"/>
        <label>1</label>
        <note>catalytic</note>
    </ligand>
</feature>
<feature type="binding site" evidence="1">
    <location>
        <position position="508"/>
    </location>
    <ligand>
        <name>Mg(2+)</name>
        <dbReference type="ChEBI" id="CHEBI:18420"/>
        <label>1</label>
        <note>catalytic</note>
    </ligand>
</feature>
<feature type="binding site" evidence="1">
    <location>
        <position position="508"/>
    </location>
    <ligand>
        <name>Mg(2+)</name>
        <dbReference type="ChEBI" id="CHEBI:18420"/>
        <label>2</label>
    </ligand>
</feature>
<feature type="binding site" evidence="1">
    <location>
        <position position="510"/>
    </location>
    <ligand>
        <name>Mg(2+)</name>
        <dbReference type="ChEBI" id="CHEBI:18420"/>
        <label>2</label>
    </ligand>
</feature>
<feature type="site" description="Interaction with DNA" evidence="1">
    <location>
        <position position="460"/>
    </location>
</feature>
<feature type="site" description="Interaction with DNA" evidence="1">
    <location>
        <position position="463"/>
    </location>
</feature>
<sequence length="650" mass="72353">MIEENKHFEKKMQEYDASQIQVLEGLEAVRMRPGMYIGSTAKEGLHHLVWEIVDNSIDEALAGFASHIKVFIEADNSITVVDDGRGIPVDIQVKTGRPAVETVFTVLHAGGKFGGGSYKVSGGLHGVGSSVVNALSTQLDVRVYKNGQIHYQEFKRGAVVADLEVIGTTDVTGTTVHFTPDPEIFTETTQFDYSVLAKRIQELAFLNRGLKISITDKRSGMEQEEHFHYEGGIGSYVEFLNDKKDVIFETPIYTDGELEGIAVEVAMQYTTSYQETVMSFANNIHTHEGGTHEQGFRAALTRVINDYAKKNKILKENEDNLTGEDVREGLTAVISVKHPNPQFEGQTKTKLGNSEVVKITNRLFSEAFQRFLLENPQVARKIVEKGILASKARIAAKRAREVTRKKSGLEISNLPGKLADCSSNDANQNELFIVEGDSAGGSAKSGRNREFQAILPIRGKILNVEKATMDKILANEEIRSLFTAMGTGFGADFDVSKARYQKLVIMTDADVDGAHIRTLLLTLIYRFMRPVLEAGYVYIAQPPIYGVKVGSEIKEYIQPGIDQEDQLKTALEKYSIGRSKPTVQRYKGLGEMDDHQLWETTMDPENRLMARVTVDDAAEADKVFDMLMGDRVEPRRDFIEENAVYSTLDI</sequence>
<name>GYRB_STRPQ</name>
<evidence type="ECO:0000255" key="1">
    <source>
        <dbReference type="HAMAP-Rule" id="MF_01898"/>
    </source>
</evidence>
<reference key="1">
    <citation type="journal article" date="2003" name="Genome Res.">
        <title>Genome sequence of an M3 strain of Streptococcus pyogenes reveals a large-scale genomic rearrangement in invasive strains and new insights into phage evolution.</title>
        <authorList>
            <person name="Nakagawa I."/>
            <person name="Kurokawa K."/>
            <person name="Yamashita A."/>
            <person name="Nakata M."/>
            <person name="Tomiyasu Y."/>
            <person name="Okahashi N."/>
            <person name="Kawabata S."/>
            <person name="Yamazaki K."/>
            <person name="Shiba T."/>
            <person name="Yasunaga T."/>
            <person name="Hayashi H."/>
            <person name="Hattori M."/>
            <person name="Hamada S."/>
        </authorList>
    </citation>
    <scope>NUCLEOTIDE SEQUENCE [LARGE SCALE GENOMIC DNA]</scope>
    <source>
        <strain>SSI-1</strain>
    </source>
</reference>
<proteinExistence type="inferred from homology"/>
<protein>
    <recommendedName>
        <fullName evidence="1">DNA gyrase subunit B</fullName>
        <ecNumber evidence="1">5.6.2.2</ecNumber>
    </recommendedName>
</protein>
<organism>
    <name type="scientific">Streptococcus pyogenes serotype M3 (strain SSI-1)</name>
    <dbReference type="NCBI Taxonomy" id="193567"/>
    <lineage>
        <taxon>Bacteria</taxon>
        <taxon>Bacillati</taxon>
        <taxon>Bacillota</taxon>
        <taxon>Bacilli</taxon>
        <taxon>Lactobacillales</taxon>
        <taxon>Streptococcaceae</taxon>
        <taxon>Streptococcus</taxon>
    </lineage>
</organism>
<dbReference type="EC" id="5.6.2.2" evidence="1"/>
<dbReference type="EMBL" id="BA000034">
    <property type="protein sequence ID" value="BAC64473.1"/>
    <property type="molecule type" value="Genomic_DNA"/>
</dbReference>
<dbReference type="RefSeq" id="WP_011054323.1">
    <property type="nucleotide sequence ID" value="NC_004606.1"/>
</dbReference>
<dbReference type="SMR" id="P0DG05"/>
<dbReference type="KEGG" id="sps:SPs1378"/>
<dbReference type="HOGENOM" id="CLU_006146_1_2_9"/>
<dbReference type="GO" id="GO:0005694">
    <property type="term" value="C:chromosome"/>
    <property type="evidence" value="ECO:0007669"/>
    <property type="project" value="InterPro"/>
</dbReference>
<dbReference type="GO" id="GO:0005737">
    <property type="term" value="C:cytoplasm"/>
    <property type="evidence" value="ECO:0007669"/>
    <property type="project" value="UniProtKB-SubCell"/>
</dbReference>
<dbReference type="GO" id="GO:0005524">
    <property type="term" value="F:ATP binding"/>
    <property type="evidence" value="ECO:0007669"/>
    <property type="project" value="UniProtKB-UniRule"/>
</dbReference>
<dbReference type="GO" id="GO:0003677">
    <property type="term" value="F:DNA binding"/>
    <property type="evidence" value="ECO:0007669"/>
    <property type="project" value="UniProtKB-KW"/>
</dbReference>
<dbReference type="GO" id="GO:0034335">
    <property type="term" value="F:DNA negative supercoiling activity"/>
    <property type="evidence" value="ECO:0007669"/>
    <property type="project" value="UniProtKB-ARBA"/>
</dbReference>
<dbReference type="GO" id="GO:0046872">
    <property type="term" value="F:metal ion binding"/>
    <property type="evidence" value="ECO:0007669"/>
    <property type="project" value="UniProtKB-KW"/>
</dbReference>
<dbReference type="GO" id="GO:0006265">
    <property type="term" value="P:DNA topological change"/>
    <property type="evidence" value="ECO:0007669"/>
    <property type="project" value="UniProtKB-UniRule"/>
</dbReference>
<dbReference type="GO" id="GO:0006261">
    <property type="term" value="P:DNA-templated DNA replication"/>
    <property type="evidence" value="ECO:0007669"/>
    <property type="project" value="UniProtKB-UniRule"/>
</dbReference>
<dbReference type="CDD" id="cd16928">
    <property type="entry name" value="HATPase_GyrB-like"/>
    <property type="match status" value="1"/>
</dbReference>
<dbReference type="CDD" id="cd00822">
    <property type="entry name" value="TopoII_Trans_DNA_gyrase"/>
    <property type="match status" value="1"/>
</dbReference>
<dbReference type="CDD" id="cd03366">
    <property type="entry name" value="TOPRIM_TopoIIA_GyrB"/>
    <property type="match status" value="1"/>
</dbReference>
<dbReference type="FunFam" id="3.30.230.10:FF:000005">
    <property type="entry name" value="DNA gyrase subunit B"/>
    <property type="match status" value="1"/>
</dbReference>
<dbReference type="FunFam" id="3.30.565.10:FF:000002">
    <property type="entry name" value="DNA gyrase subunit B"/>
    <property type="match status" value="1"/>
</dbReference>
<dbReference type="FunFam" id="3.40.50.670:FF:000002">
    <property type="entry name" value="DNA gyrase subunit B"/>
    <property type="match status" value="1"/>
</dbReference>
<dbReference type="Gene3D" id="3.30.230.10">
    <property type="match status" value="1"/>
</dbReference>
<dbReference type="Gene3D" id="3.40.50.670">
    <property type="match status" value="1"/>
</dbReference>
<dbReference type="Gene3D" id="3.30.565.10">
    <property type="entry name" value="Histidine kinase-like ATPase, C-terminal domain"/>
    <property type="match status" value="1"/>
</dbReference>
<dbReference type="HAMAP" id="MF_01898">
    <property type="entry name" value="GyrB"/>
    <property type="match status" value="1"/>
</dbReference>
<dbReference type="InterPro" id="IPR002288">
    <property type="entry name" value="DNA_gyrase_B_C"/>
</dbReference>
<dbReference type="InterPro" id="IPR011557">
    <property type="entry name" value="GyrB"/>
</dbReference>
<dbReference type="InterPro" id="IPR036890">
    <property type="entry name" value="HATPase_C_sf"/>
</dbReference>
<dbReference type="InterPro" id="IPR020568">
    <property type="entry name" value="Ribosomal_Su5_D2-typ_SF"/>
</dbReference>
<dbReference type="InterPro" id="IPR014721">
    <property type="entry name" value="Ribsml_uS5_D2-typ_fold_subgr"/>
</dbReference>
<dbReference type="InterPro" id="IPR001241">
    <property type="entry name" value="Topo_IIA"/>
</dbReference>
<dbReference type="InterPro" id="IPR013760">
    <property type="entry name" value="Topo_IIA-like_dom_sf"/>
</dbReference>
<dbReference type="InterPro" id="IPR000565">
    <property type="entry name" value="Topo_IIA_B"/>
</dbReference>
<dbReference type="InterPro" id="IPR013759">
    <property type="entry name" value="Topo_IIA_B_C"/>
</dbReference>
<dbReference type="InterPro" id="IPR013506">
    <property type="entry name" value="Topo_IIA_bsu_dom2"/>
</dbReference>
<dbReference type="InterPro" id="IPR018522">
    <property type="entry name" value="TopoIIA_CS"/>
</dbReference>
<dbReference type="InterPro" id="IPR006171">
    <property type="entry name" value="TOPRIM_dom"/>
</dbReference>
<dbReference type="InterPro" id="IPR034160">
    <property type="entry name" value="TOPRIM_GyrB"/>
</dbReference>
<dbReference type="NCBIfam" id="TIGR01059">
    <property type="entry name" value="gyrB"/>
    <property type="match status" value="1"/>
</dbReference>
<dbReference type="NCBIfam" id="NF004189">
    <property type="entry name" value="PRK05644.1"/>
    <property type="match status" value="1"/>
</dbReference>
<dbReference type="NCBIfam" id="NF011501">
    <property type="entry name" value="PRK14939.1"/>
    <property type="match status" value="1"/>
</dbReference>
<dbReference type="PANTHER" id="PTHR45866:SF1">
    <property type="entry name" value="DNA GYRASE SUBUNIT B, MITOCHONDRIAL"/>
    <property type="match status" value="1"/>
</dbReference>
<dbReference type="PANTHER" id="PTHR45866">
    <property type="entry name" value="DNA GYRASE/TOPOISOMERASE SUBUNIT B"/>
    <property type="match status" value="1"/>
</dbReference>
<dbReference type="Pfam" id="PF00204">
    <property type="entry name" value="DNA_gyraseB"/>
    <property type="match status" value="1"/>
</dbReference>
<dbReference type="Pfam" id="PF00986">
    <property type="entry name" value="DNA_gyraseB_C"/>
    <property type="match status" value="1"/>
</dbReference>
<dbReference type="Pfam" id="PF02518">
    <property type="entry name" value="HATPase_c"/>
    <property type="match status" value="1"/>
</dbReference>
<dbReference type="Pfam" id="PF01751">
    <property type="entry name" value="Toprim"/>
    <property type="match status" value="1"/>
</dbReference>
<dbReference type="PRINTS" id="PR01159">
    <property type="entry name" value="DNAGYRASEB"/>
</dbReference>
<dbReference type="PRINTS" id="PR00418">
    <property type="entry name" value="TPI2FAMILY"/>
</dbReference>
<dbReference type="SMART" id="SM00387">
    <property type="entry name" value="HATPase_c"/>
    <property type="match status" value="1"/>
</dbReference>
<dbReference type="SMART" id="SM00433">
    <property type="entry name" value="TOP2c"/>
    <property type="match status" value="1"/>
</dbReference>
<dbReference type="SUPFAM" id="SSF55874">
    <property type="entry name" value="ATPase domain of HSP90 chaperone/DNA topoisomerase II/histidine kinase"/>
    <property type="match status" value="1"/>
</dbReference>
<dbReference type="SUPFAM" id="SSF54211">
    <property type="entry name" value="Ribosomal protein S5 domain 2-like"/>
    <property type="match status" value="1"/>
</dbReference>
<dbReference type="SUPFAM" id="SSF56719">
    <property type="entry name" value="Type II DNA topoisomerase"/>
    <property type="match status" value="1"/>
</dbReference>
<dbReference type="PROSITE" id="PS00177">
    <property type="entry name" value="TOPOISOMERASE_II"/>
    <property type="match status" value="1"/>
</dbReference>
<dbReference type="PROSITE" id="PS50880">
    <property type="entry name" value="TOPRIM"/>
    <property type="match status" value="1"/>
</dbReference>
<gene>
    <name evidence="1" type="primary">gyrB</name>
    <name type="ordered locus">SPs1378</name>
</gene>
<keyword id="KW-0067">ATP-binding</keyword>
<keyword id="KW-0963">Cytoplasm</keyword>
<keyword id="KW-0238">DNA-binding</keyword>
<keyword id="KW-0413">Isomerase</keyword>
<keyword id="KW-0460">Magnesium</keyword>
<keyword id="KW-0479">Metal-binding</keyword>
<keyword id="KW-0547">Nucleotide-binding</keyword>
<keyword id="KW-0799">Topoisomerase</keyword>
<accession>P0DG05</accession>
<accession>Q878H1</accession>
<accession>Q8K840</accession>
<comment type="function">
    <text evidence="1">A type II topoisomerase that negatively supercoils closed circular double-stranded (ds) DNA in an ATP-dependent manner to modulate DNA topology and maintain chromosomes in an underwound state. Negative supercoiling favors strand separation, and DNA replication, transcription, recombination and repair, all of which involve strand separation. Also able to catalyze the interconversion of other topological isomers of dsDNA rings, including catenanes and knotted rings. Type II topoisomerases break and join 2 DNA strands simultaneously in an ATP-dependent manner.</text>
</comment>
<comment type="catalytic activity">
    <reaction evidence="1">
        <text>ATP-dependent breakage, passage and rejoining of double-stranded DNA.</text>
        <dbReference type="EC" id="5.6.2.2"/>
    </reaction>
</comment>
<comment type="cofactor">
    <cofactor evidence="1">
        <name>Mg(2+)</name>
        <dbReference type="ChEBI" id="CHEBI:18420"/>
    </cofactor>
    <cofactor evidence="1">
        <name>Mn(2+)</name>
        <dbReference type="ChEBI" id="CHEBI:29035"/>
    </cofactor>
    <cofactor evidence="1">
        <name>Ca(2+)</name>
        <dbReference type="ChEBI" id="CHEBI:29108"/>
    </cofactor>
    <text evidence="1">Binds two Mg(2+) per subunit. The magnesium ions form salt bridges with both the protein and the DNA. Can also accept other divalent metal cations, such as Mn(2+) or Ca(2+).</text>
</comment>
<comment type="subunit">
    <text evidence="1">Heterotetramer, composed of two GyrA and two GyrB chains. In the heterotetramer, GyrA contains the active site tyrosine that forms a transient covalent intermediate with DNA, while GyrB binds cofactors and catalyzes ATP hydrolysis.</text>
</comment>
<comment type="subcellular location">
    <subcellularLocation>
        <location evidence="1">Cytoplasm</location>
    </subcellularLocation>
</comment>
<comment type="miscellaneous">
    <text evidence="1">Few gyrases are as efficient as E.coli at forming negative supercoils. Not all organisms have 2 type II topoisomerases; in organisms with a single type II topoisomerase this enzyme also has to decatenate newly replicated chromosomes.</text>
</comment>
<comment type="similarity">
    <text evidence="1">Belongs to the type II topoisomerase GyrB family.</text>
</comment>